<protein>
    <recommendedName>
        <fullName>Acidic phospholipase A2 H1E6</fullName>
        <shortName>svPLA2</shortName>
        <ecNumber>3.1.1.4</ecNumber>
    </recommendedName>
    <alternativeName>
        <fullName>Phosphatidylcholine 2-acylhydrolase</fullName>
    </alternativeName>
</protein>
<reference key="1">
    <citation type="journal article" date="2000" name="Eur. J. Biochem.">
        <title>Phospholipases A2 from Callosellasma rhodostoma venom gland. Cloning and sequencing of 10 of the cDNAs, three-dimensional modelling and chemical modification of the major isozyme.</title>
        <authorList>
            <person name="Tsai I.-H."/>
            <person name="Wang Y.-M."/>
            <person name="Au L.-C."/>
            <person name="Ko T.-P."/>
            <person name="Chen Y.-H."/>
            <person name="Chu Y.-F."/>
        </authorList>
    </citation>
    <scope>NUCLEOTIDE SEQUENCE [MRNA]</scope>
    <scope>FUNCTION</scope>
    <scope>SUBUNIT</scope>
    <scope>MASS SPECTROMETRY</scope>
    <source>
        <tissue>Venom</tissue>
        <tissue>Venom gland</tissue>
    </source>
</reference>
<sequence>MRTLWILAVLQVGVEGHLLQFETMIIKMTKQTGLFSYSFYGCYCGWGGHGRPQDPTDRCCFVHDCCYGKVTNCDPKAAAYSYTIENGGIVCGGDDPCKKQICECDRAAAMCFRDNLDTYNYAKYWKFSAKDCQEESDPC</sequence>
<comment type="function">
    <text evidence="4">Snake venom phospholipase A2 (PLA2) that inhibits ADP-induced platelet aggregation. PLA2 catalyzes the calcium-dependent hydrolysis of the 2-acyl groups in 3-sn-phosphoglycerides.</text>
</comment>
<comment type="catalytic activity">
    <reaction evidence="2 3">
        <text>a 1,2-diacyl-sn-glycero-3-phosphocholine + H2O = a 1-acyl-sn-glycero-3-phosphocholine + a fatty acid + H(+)</text>
        <dbReference type="Rhea" id="RHEA:15801"/>
        <dbReference type="ChEBI" id="CHEBI:15377"/>
        <dbReference type="ChEBI" id="CHEBI:15378"/>
        <dbReference type="ChEBI" id="CHEBI:28868"/>
        <dbReference type="ChEBI" id="CHEBI:57643"/>
        <dbReference type="ChEBI" id="CHEBI:58168"/>
        <dbReference type="EC" id="3.1.1.4"/>
    </reaction>
</comment>
<comment type="cofactor">
    <cofactor evidence="1">
        <name>Ca(2+)</name>
        <dbReference type="ChEBI" id="CHEBI:29108"/>
    </cofactor>
    <text evidence="1">Binds 1 Ca(2+) ion per subunit.</text>
</comment>
<comment type="subunit">
    <text evidence="4">Homodimer.</text>
</comment>
<comment type="subcellular location">
    <subcellularLocation>
        <location>Secreted</location>
    </subcellularLocation>
</comment>
<comment type="tissue specificity">
    <text>Expressed by the venom gland.</text>
</comment>
<comment type="mass spectrometry"/>
<comment type="similarity">
    <text evidence="5">Belongs to the phospholipase A2 family. Group II subfamily. D49 sub-subfamily.</text>
</comment>
<organism>
    <name type="scientific">Calloselasma rhodostoma</name>
    <name type="common">Malayan pit viper</name>
    <name type="synonym">Agkistrodon rhodostoma</name>
    <dbReference type="NCBI Taxonomy" id="8717"/>
    <lineage>
        <taxon>Eukaryota</taxon>
        <taxon>Metazoa</taxon>
        <taxon>Chordata</taxon>
        <taxon>Craniata</taxon>
        <taxon>Vertebrata</taxon>
        <taxon>Euteleostomi</taxon>
        <taxon>Lepidosauria</taxon>
        <taxon>Squamata</taxon>
        <taxon>Bifurcata</taxon>
        <taxon>Unidentata</taxon>
        <taxon>Episquamata</taxon>
        <taxon>Toxicofera</taxon>
        <taxon>Serpentes</taxon>
        <taxon>Colubroidea</taxon>
        <taxon>Viperidae</taxon>
        <taxon>Crotalinae</taxon>
        <taxon>Calloselasma</taxon>
    </lineage>
</organism>
<name>PA2AE_CALRH</name>
<feature type="signal peptide">
    <location>
        <begin position="1"/>
        <end position="16"/>
    </location>
</feature>
<feature type="chain" id="PRO_0000022781" description="Acidic phospholipase A2 H1E6">
    <location>
        <begin position="17"/>
        <end position="139"/>
    </location>
</feature>
<feature type="active site" evidence="1">
    <location>
        <position position="63"/>
    </location>
</feature>
<feature type="active site" evidence="1">
    <location>
        <position position="105"/>
    </location>
</feature>
<feature type="binding site" evidence="1">
    <location>
        <position position="43"/>
    </location>
    <ligand>
        <name>Ca(2+)</name>
        <dbReference type="ChEBI" id="CHEBI:29108"/>
    </ligand>
</feature>
<feature type="binding site" evidence="1">
    <location>
        <position position="45"/>
    </location>
    <ligand>
        <name>Ca(2+)</name>
        <dbReference type="ChEBI" id="CHEBI:29108"/>
    </ligand>
</feature>
<feature type="binding site" evidence="1">
    <location>
        <position position="47"/>
    </location>
    <ligand>
        <name>Ca(2+)</name>
        <dbReference type="ChEBI" id="CHEBI:29108"/>
    </ligand>
</feature>
<feature type="binding site" evidence="1">
    <location>
        <position position="64"/>
    </location>
    <ligand>
        <name>Ca(2+)</name>
        <dbReference type="ChEBI" id="CHEBI:29108"/>
    </ligand>
</feature>
<feature type="disulfide bond" evidence="1">
    <location>
        <begin position="42"/>
        <end position="132"/>
    </location>
</feature>
<feature type="disulfide bond" evidence="1">
    <location>
        <begin position="44"/>
        <end position="60"/>
    </location>
</feature>
<feature type="disulfide bond" evidence="1">
    <location>
        <begin position="59"/>
        <end position="111"/>
    </location>
</feature>
<feature type="disulfide bond" evidence="1">
    <location>
        <begin position="65"/>
        <end position="139"/>
    </location>
</feature>
<feature type="disulfide bond" evidence="1">
    <location>
        <begin position="66"/>
        <end position="104"/>
    </location>
</feature>
<feature type="disulfide bond" evidence="1">
    <location>
        <begin position="73"/>
        <end position="97"/>
    </location>
</feature>
<feature type="disulfide bond" evidence="1">
    <location>
        <begin position="91"/>
        <end position="102"/>
    </location>
</feature>
<keyword id="KW-0106">Calcium</keyword>
<keyword id="KW-1015">Disulfide bond</keyword>
<keyword id="KW-1199">Hemostasis impairing toxin</keyword>
<keyword id="KW-0378">Hydrolase</keyword>
<keyword id="KW-0442">Lipid degradation</keyword>
<keyword id="KW-0443">Lipid metabolism</keyword>
<keyword id="KW-0479">Metal-binding</keyword>
<keyword id="KW-1201">Platelet aggregation inhibiting toxin</keyword>
<keyword id="KW-0964">Secreted</keyword>
<keyword id="KW-0732">Signal</keyword>
<keyword id="KW-0800">Toxin</keyword>
<evidence type="ECO:0000250" key="1"/>
<evidence type="ECO:0000255" key="2">
    <source>
        <dbReference type="PROSITE-ProRule" id="PRU10035"/>
    </source>
</evidence>
<evidence type="ECO:0000255" key="3">
    <source>
        <dbReference type="PROSITE-ProRule" id="PRU10036"/>
    </source>
</evidence>
<evidence type="ECO:0000269" key="4">
    <source>
    </source>
</evidence>
<evidence type="ECO:0000305" key="5"/>
<accession>Q9PVF2</accession>
<proteinExistence type="evidence at protein level"/>
<dbReference type="EC" id="3.1.1.4"/>
<dbReference type="EMBL" id="AF104067">
    <property type="protein sequence ID" value="AAF03251.1"/>
    <property type="molecule type" value="mRNA"/>
</dbReference>
<dbReference type="SMR" id="Q9PVF2"/>
<dbReference type="GO" id="GO:0005576">
    <property type="term" value="C:extracellular region"/>
    <property type="evidence" value="ECO:0007669"/>
    <property type="project" value="UniProtKB-SubCell"/>
</dbReference>
<dbReference type="GO" id="GO:0005509">
    <property type="term" value="F:calcium ion binding"/>
    <property type="evidence" value="ECO:0007669"/>
    <property type="project" value="InterPro"/>
</dbReference>
<dbReference type="GO" id="GO:0047498">
    <property type="term" value="F:calcium-dependent phospholipase A2 activity"/>
    <property type="evidence" value="ECO:0007669"/>
    <property type="project" value="TreeGrafter"/>
</dbReference>
<dbReference type="GO" id="GO:0005543">
    <property type="term" value="F:phospholipid binding"/>
    <property type="evidence" value="ECO:0007669"/>
    <property type="project" value="TreeGrafter"/>
</dbReference>
<dbReference type="GO" id="GO:0090729">
    <property type="term" value="F:toxin activity"/>
    <property type="evidence" value="ECO:0007669"/>
    <property type="project" value="UniProtKB-KW"/>
</dbReference>
<dbReference type="GO" id="GO:0050482">
    <property type="term" value="P:arachidonate secretion"/>
    <property type="evidence" value="ECO:0007669"/>
    <property type="project" value="InterPro"/>
</dbReference>
<dbReference type="GO" id="GO:0016042">
    <property type="term" value="P:lipid catabolic process"/>
    <property type="evidence" value="ECO:0007669"/>
    <property type="project" value="UniProtKB-KW"/>
</dbReference>
<dbReference type="GO" id="GO:0042130">
    <property type="term" value="P:negative regulation of T cell proliferation"/>
    <property type="evidence" value="ECO:0007669"/>
    <property type="project" value="TreeGrafter"/>
</dbReference>
<dbReference type="GO" id="GO:0006644">
    <property type="term" value="P:phospholipid metabolic process"/>
    <property type="evidence" value="ECO:0007669"/>
    <property type="project" value="InterPro"/>
</dbReference>
<dbReference type="CDD" id="cd00125">
    <property type="entry name" value="PLA2c"/>
    <property type="match status" value="1"/>
</dbReference>
<dbReference type="FunFam" id="1.20.90.10:FF:000001">
    <property type="entry name" value="Basic phospholipase A2 homolog"/>
    <property type="match status" value="1"/>
</dbReference>
<dbReference type="Gene3D" id="1.20.90.10">
    <property type="entry name" value="Phospholipase A2 domain"/>
    <property type="match status" value="1"/>
</dbReference>
<dbReference type="InterPro" id="IPR001211">
    <property type="entry name" value="PLipase_A2"/>
</dbReference>
<dbReference type="InterPro" id="IPR033112">
    <property type="entry name" value="PLipase_A2_Asp_AS"/>
</dbReference>
<dbReference type="InterPro" id="IPR016090">
    <property type="entry name" value="PLipase_A2_dom"/>
</dbReference>
<dbReference type="InterPro" id="IPR036444">
    <property type="entry name" value="PLipase_A2_dom_sf"/>
</dbReference>
<dbReference type="InterPro" id="IPR033113">
    <property type="entry name" value="PLipase_A2_His_AS"/>
</dbReference>
<dbReference type="PANTHER" id="PTHR11716">
    <property type="entry name" value="PHOSPHOLIPASE A2 FAMILY MEMBER"/>
    <property type="match status" value="1"/>
</dbReference>
<dbReference type="PANTHER" id="PTHR11716:SF9">
    <property type="entry name" value="PHOSPHOLIPASE A2, MEMBRANE ASSOCIATED"/>
    <property type="match status" value="1"/>
</dbReference>
<dbReference type="Pfam" id="PF00068">
    <property type="entry name" value="Phospholip_A2_1"/>
    <property type="match status" value="1"/>
</dbReference>
<dbReference type="PRINTS" id="PR00389">
    <property type="entry name" value="PHPHLIPASEA2"/>
</dbReference>
<dbReference type="SMART" id="SM00085">
    <property type="entry name" value="PA2c"/>
    <property type="match status" value="1"/>
</dbReference>
<dbReference type="SUPFAM" id="SSF48619">
    <property type="entry name" value="Phospholipase A2, PLA2"/>
    <property type="match status" value="1"/>
</dbReference>
<dbReference type="PROSITE" id="PS00119">
    <property type="entry name" value="PA2_ASP"/>
    <property type="match status" value="1"/>
</dbReference>
<dbReference type="PROSITE" id="PS00118">
    <property type="entry name" value="PA2_HIS"/>
    <property type="match status" value="1"/>
</dbReference>